<evidence type="ECO:0000269" key="1">
    <source>
    </source>
</evidence>
<evidence type="ECO:0000303" key="2">
    <source>
    </source>
</evidence>
<evidence type="ECO:0000305" key="3"/>
<organism>
    <name type="scientific">Bacillus cereus (strain H3081.97)</name>
    <dbReference type="NCBI Taxonomy" id="451708"/>
    <lineage>
        <taxon>Bacteria</taxon>
        <taxon>Bacillati</taxon>
        <taxon>Bacillota</taxon>
        <taxon>Bacilli</taxon>
        <taxon>Bacillales</taxon>
        <taxon>Bacillaceae</taxon>
        <taxon>Bacillus</taxon>
        <taxon>Bacillus cereus group</taxon>
    </lineage>
</organism>
<comment type="function">
    <text evidence="1">BREX systems (bacteriophage exclusion) provide immunity against bacteriophage. Part of a type 1 BREX system. This system allows phage adsorption but prevents phage DNA replication, without degradation of the phage DNA. Methylation of bacterial DNA by PglX probably guides self/non-self discrimination. When the brxA-brxB-brxC-pglX and pglZ-brxL operons are transformed into a susceptible B.subtilis strain (BEST7003) they confer resistance to bacteriophages SPbeta, SP16, Zeta, phi3T and SP02 and partial protection to phages SP01 and SP82G (these include lytic and temperate phage). They do not protect against phages phi105, rho10 or rho14. Additionally confers a very slight reduction in efficiency of plasmid transformation.</text>
</comment>
<comment type="induction">
    <text evidence="1">Part of the brxA-brxB-brxC-pglX operon.</text>
</comment>
<comment type="similarity">
    <text evidence="3">Belongs to the BrxB family.</text>
</comment>
<accession>P0DUF1</accession>
<dbReference type="EMBL" id="ABDL02000007">
    <property type="protein sequence ID" value="EDZ57599.1"/>
    <property type="molecule type" value="Genomic_DNA"/>
</dbReference>
<dbReference type="GO" id="GO:0051607">
    <property type="term" value="P:defense response to virus"/>
    <property type="evidence" value="ECO:0007669"/>
    <property type="project" value="UniProtKB-KW"/>
</dbReference>
<dbReference type="InterPro" id="IPR014858">
    <property type="entry name" value="BrxB"/>
</dbReference>
<dbReference type="Pfam" id="PF08747">
    <property type="entry name" value="BrxB"/>
    <property type="match status" value="1"/>
</dbReference>
<reference key="1">
    <citation type="submission" date="2008-09" db="EMBL/GenBank/DDBJ databases">
        <title>Genome sequence of Bacillus cereus H3081.97.</title>
        <authorList>
            <person name="Dodson R.J."/>
            <person name="Durkin A.S."/>
            <person name="Rosovitz M.J."/>
            <person name="Rasko D.A."/>
            <person name="Hoffmaster A."/>
            <person name="Ravel J."/>
            <person name="Sutton G."/>
        </authorList>
    </citation>
    <scope>NUCLEOTIDE SEQUENCE [LARGE SCALE GENOMIC DNA]</scope>
    <source>
        <strain>H3081.97</strain>
    </source>
</reference>
<reference key="2">
    <citation type="journal article" date="2015" name="EMBO J.">
        <title>BREX is a novel phage resistance system widespread in microbial genomes.</title>
        <authorList>
            <person name="Goldfarb T."/>
            <person name="Sberro H."/>
            <person name="Weinstock E."/>
            <person name="Cohen O."/>
            <person name="Doron S."/>
            <person name="Charpak-Amikam Y."/>
            <person name="Afik S."/>
            <person name="Ofir G."/>
            <person name="Sorek R."/>
        </authorList>
    </citation>
    <scope>FUNCTION IN ANTIVIRAL DEFENSE</scope>
    <scope>INDUCTION</scope>
    <scope>CLASSIFICATION AND NOMENCLATURE</scope>
    <source>
        <strain>H3081.97</strain>
    </source>
</reference>
<proteinExistence type="evidence at protein level"/>
<sequence length="192" mass="22616">MRRINERLDEILPKITDASFRENKGLGNEIGFYIFDYDPKYEMLVREHIVYMQERLKNDSSLHIREFDLYEVMLEILEEKGYLQKNIDMEQKKGSDFILNATRKALRLTSNNDLVVQYITDRVQPNDIVFLTGVGKVFPIIRSHTILNNLHKAVDNVPLVMFFPGTYDGLELVLFGEIKDDNYYRAFQLIDK</sequence>
<protein>
    <recommendedName>
        <fullName evidence="2">BREX protein BrxB</fullName>
    </recommendedName>
</protein>
<feature type="chain" id="PRO_0000452155" description="BREX protein BrxB">
    <location>
        <begin position="1"/>
        <end position="192"/>
    </location>
</feature>
<keyword id="KW-0051">Antiviral defense</keyword>
<name>BRXB_BACCH</name>
<gene>
    <name evidence="2" type="primary">brxB</name>
    <name type="ORF">BCH308197_0964</name>
</gene>